<reference key="1">
    <citation type="journal article" date="2007" name="Proc. Natl. Acad. Sci. U.S.A.">
        <title>Genome and proteome of long-chain alkane degrading Geobacillus thermodenitrificans NG80-2 isolated from a deep-subsurface oil reservoir.</title>
        <authorList>
            <person name="Feng L."/>
            <person name="Wang W."/>
            <person name="Cheng J."/>
            <person name="Ren Y."/>
            <person name="Zhao G."/>
            <person name="Gao C."/>
            <person name="Tang Y."/>
            <person name="Liu X."/>
            <person name="Han W."/>
            <person name="Peng X."/>
            <person name="Liu R."/>
            <person name="Wang L."/>
        </authorList>
    </citation>
    <scope>NUCLEOTIDE SEQUENCE [LARGE SCALE GENOMIC DNA]</scope>
    <source>
        <strain>NG80-2</strain>
    </source>
</reference>
<proteinExistence type="inferred from homology"/>
<protein>
    <recommendedName>
        <fullName evidence="1">Dihydroorotate dehydrogenase B (NAD(+)), electron transfer subunit</fullName>
    </recommendedName>
    <alternativeName>
        <fullName evidence="1">Dihydroorotate oxidase B, electron transfer subunit</fullName>
    </alternativeName>
</protein>
<evidence type="ECO:0000255" key="1">
    <source>
        <dbReference type="HAMAP-Rule" id="MF_01211"/>
    </source>
</evidence>
<keyword id="KW-0001">2Fe-2S</keyword>
<keyword id="KW-0249">Electron transport</keyword>
<keyword id="KW-0274">FAD</keyword>
<keyword id="KW-0285">Flavoprotein</keyword>
<keyword id="KW-0408">Iron</keyword>
<keyword id="KW-0411">Iron-sulfur</keyword>
<keyword id="KW-0479">Metal-binding</keyword>
<keyword id="KW-0665">Pyrimidine biosynthesis</keyword>
<keyword id="KW-0813">Transport</keyword>
<organism>
    <name type="scientific">Geobacillus thermodenitrificans (strain NG80-2)</name>
    <dbReference type="NCBI Taxonomy" id="420246"/>
    <lineage>
        <taxon>Bacteria</taxon>
        <taxon>Bacillati</taxon>
        <taxon>Bacillota</taxon>
        <taxon>Bacilli</taxon>
        <taxon>Bacillales</taxon>
        <taxon>Anoxybacillaceae</taxon>
        <taxon>Geobacillus</taxon>
    </lineage>
</organism>
<name>PYRK_GEOTN</name>
<gene>
    <name evidence="1" type="primary">pyrK</name>
    <name type="ordered locus">GTNG_1010</name>
</gene>
<feature type="chain" id="PRO_1000066403" description="Dihydroorotate dehydrogenase B (NAD(+)), electron transfer subunit">
    <location>
        <begin position="1"/>
        <end position="257"/>
    </location>
</feature>
<feature type="domain" description="FAD-binding FR-type" evidence="1">
    <location>
        <begin position="2"/>
        <end position="102"/>
    </location>
</feature>
<feature type="binding site" evidence="1">
    <location>
        <begin position="53"/>
        <end position="56"/>
    </location>
    <ligand>
        <name>FAD</name>
        <dbReference type="ChEBI" id="CHEBI:57692"/>
    </ligand>
</feature>
<feature type="binding site" evidence="1">
    <location>
        <begin position="70"/>
        <end position="72"/>
    </location>
    <ligand>
        <name>FAD</name>
        <dbReference type="ChEBI" id="CHEBI:57692"/>
    </ligand>
</feature>
<feature type="binding site" evidence="1">
    <location>
        <begin position="77"/>
        <end position="78"/>
    </location>
    <ligand>
        <name>FAD</name>
        <dbReference type="ChEBI" id="CHEBI:57692"/>
    </ligand>
</feature>
<feature type="binding site" evidence="1">
    <location>
        <position position="221"/>
    </location>
    <ligand>
        <name>[2Fe-2S] cluster</name>
        <dbReference type="ChEBI" id="CHEBI:190135"/>
    </ligand>
</feature>
<feature type="binding site" evidence="1">
    <location>
        <position position="226"/>
    </location>
    <ligand>
        <name>[2Fe-2S] cluster</name>
        <dbReference type="ChEBI" id="CHEBI:190135"/>
    </ligand>
</feature>
<feature type="binding site" evidence="1">
    <location>
        <position position="229"/>
    </location>
    <ligand>
        <name>[2Fe-2S] cluster</name>
        <dbReference type="ChEBI" id="CHEBI:190135"/>
    </ligand>
</feature>
<feature type="binding site" evidence="1">
    <location>
        <position position="244"/>
    </location>
    <ligand>
        <name>[2Fe-2S] cluster</name>
        <dbReference type="ChEBI" id="CHEBI:190135"/>
    </ligand>
</feature>
<comment type="function">
    <text evidence="1">Responsible for channeling the electrons from the oxidation of dihydroorotate from the FMN redox center in the PyrD type B subunit to the ultimate electron acceptor NAD(+).</text>
</comment>
<comment type="cofactor">
    <cofactor evidence="1">
        <name>[2Fe-2S] cluster</name>
        <dbReference type="ChEBI" id="CHEBI:190135"/>
    </cofactor>
    <text evidence="1">Binds 1 [2Fe-2S] cluster per subunit.</text>
</comment>
<comment type="cofactor">
    <cofactor evidence="1">
        <name>FAD</name>
        <dbReference type="ChEBI" id="CHEBI:57692"/>
    </cofactor>
    <text evidence="1">Binds 1 FAD per subunit.</text>
</comment>
<comment type="pathway">
    <text evidence="1">Pyrimidine metabolism; UMP biosynthesis via de novo pathway; orotate from (S)-dihydroorotate (NAD(+) route): step 1/1.</text>
</comment>
<comment type="subunit">
    <text evidence="1">Heterotetramer of 2 PyrK and 2 PyrD type B subunits.</text>
</comment>
<comment type="similarity">
    <text evidence="1">Belongs to the PyrK family.</text>
</comment>
<sequence length="257" mass="27581">MIGRERMTVVSQRMIAERTYELTLSGQLVAQMNEPGQFVHIKVAEAADPLLRRPLSLCQIDHKQGQCIIIYRQEGKGTALLTQKQPGDRVDVLGPLGHGFPLDAAPAGGRALLVGGGIGVPPLYELAKQLANRGVNVVSVLGFATKAAVFYEAEFAAFGETYIATDDGSYGMAGRVTDVIEQQGLSFDVLYACGPKPMLKALDERFRGRPVYLSLEERMGCGVGACFACVCHVPGSETAYKKVCSDGPVFRAGEVVL</sequence>
<accession>A4IM34</accession>
<dbReference type="EMBL" id="CP000557">
    <property type="protein sequence ID" value="ABO66388.1"/>
    <property type="molecule type" value="Genomic_DNA"/>
</dbReference>
<dbReference type="RefSeq" id="WP_008878655.1">
    <property type="nucleotide sequence ID" value="NC_009328.1"/>
</dbReference>
<dbReference type="SMR" id="A4IM34"/>
<dbReference type="KEGG" id="gtn:GTNG_1010"/>
<dbReference type="eggNOG" id="COG0543">
    <property type="taxonomic scope" value="Bacteria"/>
</dbReference>
<dbReference type="HOGENOM" id="CLU_003827_1_2_9"/>
<dbReference type="UniPathway" id="UPA00070">
    <property type="reaction ID" value="UER00945"/>
</dbReference>
<dbReference type="Proteomes" id="UP000001578">
    <property type="component" value="Chromosome"/>
</dbReference>
<dbReference type="GO" id="GO:0051537">
    <property type="term" value="F:2 iron, 2 sulfur cluster binding"/>
    <property type="evidence" value="ECO:0007669"/>
    <property type="project" value="UniProtKB-KW"/>
</dbReference>
<dbReference type="GO" id="GO:0009055">
    <property type="term" value="F:electron transfer activity"/>
    <property type="evidence" value="ECO:0007669"/>
    <property type="project" value="UniProtKB-UniRule"/>
</dbReference>
<dbReference type="GO" id="GO:0050660">
    <property type="term" value="F:flavin adenine dinucleotide binding"/>
    <property type="evidence" value="ECO:0007669"/>
    <property type="project" value="InterPro"/>
</dbReference>
<dbReference type="GO" id="GO:0046872">
    <property type="term" value="F:metal ion binding"/>
    <property type="evidence" value="ECO:0007669"/>
    <property type="project" value="UniProtKB-KW"/>
</dbReference>
<dbReference type="GO" id="GO:0016491">
    <property type="term" value="F:oxidoreductase activity"/>
    <property type="evidence" value="ECO:0007669"/>
    <property type="project" value="InterPro"/>
</dbReference>
<dbReference type="GO" id="GO:0044205">
    <property type="term" value="P:'de novo' UMP biosynthetic process"/>
    <property type="evidence" value="ECO:0007669"/>
    <property type="project" value="UniProtKB-UniRule"/>
</dbReference>
<dbReference type="CDD" id="cd06218">
    <property type="entry name" value="DHOD_e_trans"/>
    <property type="match status" value="1"/>
</dbReference>
<dbReference type="FunFam" id="2.10.240.10:FF:000001">
    <property type="entry name" value="Dihydroorotate dehydrogenase B (NAD(+)), electron transfer subunit"/>
    <property type="match status" value="1"/>
</dbReference>
<dbReference type="Gene3D" id="2.10.240.10">
    <property type="entry name" value="Dihydroorotate dehydrogenase, electron transfer subunit"/>
    <property type="match status" value="1"/>
</dbReference>
<dbReference type="Gene3D" id="3.40.50.80">
    <property type="entry name" value="Nucleotide-binding domain of ferredoxin-NADP reductase (FNR) module"/>
    <property type="match status" value="1"/>
</dbReference>
<dbReference type="Gene3D" id="2.40.30.10">
    <property type="entry name" value="Translation factors"/>
    <property type="match status" value="1"/>
</dbReference>
<dbReference type="HAMAP" id="MF_01211">
    <property type="entry name" value="DHODB_Fe_S_bind"/>
    <property type="match status" value="1"/>
</dbReference>
<dbReference type="InterPro" id="IPR008333">
    <property type="entry name" value="Cbr1-like_FAD-bd_dom"/>
</dbReference>
<dbReference type="InterPro" id="IPR012165">
    <property type="entry name" value="Cyt_c3_hydrogenase_gsu"/>
</dbReference>
<dbReference type="InterPro" id="IPR037117">
    <property type="entry name" value="Dihydroorotate_DH_ele_sf"/>
</dbReference>
<dbReference type="InterPro" id="IPR019480">
    <property type="entry name" value="Dihydroorotate_DH_Fe-S-bd"/>
</dbReference>
<dbReference type="InterPro" id="IPR023455">
    <property type="entry name" value="Dihydroorotate_DHASE_ETsu"/>
</dbReference>
<dbReference type="InterPro" id="IPR017927">
    <property type="entry name" value="FAD-bd_FR_type"/>
</dbReference>
<dbReference type="InterPro" id="IPR039261">
    <property type="entry name" value="FNR_nucleotide-bd"/>
</dbReference>
<dbReference type="InterPro" id="IPR001433">
    <property type="entry name" value="OxRdtase_FAD/NAD-bd"/>
</dbReference>
<dbReference type="InterPro" id="IPR050353">
    <property type="entry name" value="PyrK_electron_transfer"/>
</dbReference>
<dbReference type="InterPro" id="IPR017938">
    <property type="entry name" value="Riboflavin_synthase-like_b-brl"/>
</dbReference>
<dbReference type="NCBIfam" id="NF000797">
    <property type="entry name" value="PRK00054.1-2"/>
    <property type="match status" value="1"/>
</dbReference>
<dbReference type="NCBIfam" id="NF000799">
    <property type="entry name" value="PRK00054.1-4"/>
    <property type="match status" value="1"/>
</dbReference>
<dbReference type="PANTHER" id="PTHR43513">
    <property type="entry name" value="DIHYDROOROTATE DEHYDROGENASE B (NAD(+)), ELECTRON TRANSFER SUBUNIT"/>
    <property type="match status" value="1"/>
</dbReference>
<dbReference type="PANTHER" id="PTHR43513:SF3">
    <property type="entry name" value="DIHYDROOROTATE DEHYDROGENASE B (NAD(+)), ELECTRON TRANSFER SUBUNIT-RELATED"/>
    <property type="match status" value="1"/>
</dbReference>
<dbReference type="Pfam" id="PF10418">
    <property type="entry name" value="DHODB_Fe-S_bind"/>
    <property type="match status" value="1"/>
</dbReference>
<dbReference type="Pfam" id="PF00970">
    <property type="entry name" value="FAD_binding_6"/>
    <property type="match status" value="1"/>
</dbReference>
<dbReference type="Pfam" id="PF00175">
    <property type="entry name" value="NAD_binding_1"/>
    <property type="match status" value="1"/>
</dbReference>
<dbReference type="PIRSF" id="PIRSF006816">
    <property type="entry name" value="Cyc3_hyd_g"/>
    <property type="match status" value="1"/>
</dbReference>
<dbReference type="SUPFAM" id="SSF52343">
    <property type="entry name" value="Ferredoxin reductase-like, C-terminal NADP-linked domain"/>
    <property type="match status" value="1"/>
</dbReference>
<dbReference type="SUPFAM" id="SSF63380">
    <property type="entry name" value="Riboflavin synthase domain-like"/>
    <property type="match status" value="1"/>
</dbReference>
<dbReference type="PROSITE" id="PS51384">
    <property type="entry name" value="FAD_FR"/>
    <property type="match status" value="1"/>
</dbReference>